<accession>Q9KXR1</accession>
<reference key="1">
    <citation type="journal article" date="2002" name="Nature">
        <title>Complete genome sequence of the model actinomycete Streptomyces coelicolor A3(2).</title>
        <authorList>
            <person name="Bentley S.D."/>
            <person name="Chater K.F."/>
            <person name="Cerdeno-Tarraga A.-M."/>
            <person name="Challis G.L."/>
            <person name="Thomson N.R."/>
            <person name="James K.D."/>
            <person name="Harris D.E."/>
            <person name="Quail M.A."/>
            <person name="Kieser H."/>
            <person name="Harper D."/>
            <person name="Bateman A."/>
            <person name="Brown S."/>
            <person name="Chandra G."/>
            <person name="Chen C.W."/>
            <person name="Collins M."/>
            <person name="Cronin A."/>
            <person name="Fraser A."/>
            <person name="Goble A."/>
            <person name="Hidalgo J."/>
            <person name="Hornsby T."/>
            <person name="Howarth S."/>
            <person name="Huang C.-H."/>
            <person name="Kieser T."/>
            <person name="Larke L."/>
            <person name="Murphy L.D."/>
            <person name="Oliver K."/>
            <person name="O'Neil S."/>
            <person name="Rabbinowitsch E."/>
            <person name="Rajandream M.A."/>
            <person name="Rutherford K.M."/>
            <person name="Rutter S."/>
            <person name="Seeger K."/>
            <person name="Saunders D."/>
            <person name="Sharp S."/>
            <person name="Squares R."/>
            <person name="Squares S."/>
            <person name="Taylor K."/>
            <person name="Warren T."/>
            <person name="Wietzorrek A."/>
            <person name="Woodward J.R."/>
            <person name="Barrell B.G."/>
            <person name="Parkhill J."/>
            <person name="Hopwood D.A."/>
        </authorList>
    </citation>
    <scope>NUCLEOTIDE SEQUENCE [LARGE SCALE GENOMIC DNA]</scope>
    <source>
        <strain>ATCC BAA-471 / A3(2) / M145</strain>
    </source>
</reference>
<evidence type="ECO:0000250" key="1"/>
<evidence type="ECO:0000255" key="2">
    <source>
        <dbReference type="HAMAP-Rule" id="MF_01219"/>
    </source>
</evidence>
<comment type="function">
    <text evidence="2">Regulates the transcription of the pyrimidine nucleotide (pyr) operon in response to exogenous pyrimidines.</text>
</comment>
<comment type="function">
    <text evidence="2">Also displays a weak uracil phosphoribosyltransferase activity which is not physiologically significant.</text>
</comment>
<comment type="catalytic activity">
    <reaction evidence="2">
        <text>UMP + diphosphate = 5-phospho-alpha-D-ribose 1-diphosphate + uracil</text>
        <dbReference type="Rhea" id="RHEA:13017"/>
        <dbReference type="ChEBI" id="CHEBI:17568"/>
        <dbReference type="ChEBI" id="CHEBI:33019"/>
        <dbReference type="ChEBI" id="CHEBI:57865"/>
        <dbReference type="ChEBI" id="CHEBI:58017"/>
        <dbReference type="EC" id="2.4.2.9"/>
    </reaction>
</comment>
<comment type="similarity">
    <text evidence="2">Belongs to the purine/pyrimidine phosphoribosyltransferase family. PyrR subfamily.</text>
</comment>
<feature type="chain" id="PRO_0000183063" description="Bifunctional protein PyrR">
    <location>
        <begin position="1"/>
        <end position="193"/>
    </location>
</feature>
<feature type="short sequence motif" description="PRPP-binding" evidence="2">
    <location>
        <begin position="106"/>
        <end position="118"/>
    </location>
</feature>
<feature type="binding site" description="in other chain" evidence="1">
    <location>
        <begin position="48"/>
        <end position="49"/>
    </location>
    <ligand>
        <name>substrate</name>
        <note>ligand shared between dimeric partners</note>
    </ligand>
</feature>
<feature type="binding site" evidence="1">
    <location>
        <position position="89"/>
    </location>
    <ligand>
        <name>substrate</name>
        <note>ligand shared between dimeric partners</note>
    </ligand>
</feature>
<feature type="binding site" description="in other chain" evidence="1">
    <location>
        <position position="93"/>
    </location>
    <ligand>
        <name>substrate</name>
        <note>ligand shared between dimeric partners</note>
    </ligand>
</feature>
<feature type="binding site" description="in other chain" evidence="1">
    <location>
        <begin position="110"/>
        <end position="118"/>
    </location>
    <ligand>
        <name>substrate</name>
        <note>ligand shared between dimeric partners</note>
    </ligand>
</feature>
<feature type="binding site" description="in other chain" evidence="1">
    <location>
        <position position="143"/>
    </location>
    <ligand>
        <name>substrate</name>
        <note>ligand shared between dimeric partners</note>
    </ligand>
</feature>
<feature type="binding site" description="in other chain" evidence="1">
    <location>
        <position position="167"/>
    </location>
    <ligand>
        <name>substrate</name>
        <note>ligand shared between dimeric partners</note>
    </ligand>
</feature>
<protein>
    <recommendedName>
        <fullName evidence="2">Bifunctional protein PyrR</fullName>
    </recommendedName>
    <domain>
        <recommendedName>
            <fullName evidence="2">Pyrimidine operon regulatory protein</fullName>
        </recommendedName>
    </domain>
    <domain>
        <recommendedName>
            <fullName evidence="2">Uracil phosphoribosyltransferase</fullName>
            <shortName evidence="2">UPRTase</shortName>
            <ecNumber evidence="2">2.4.2.9</ecNumber>
        </recommendedName>
    </domain>
</protein>
<proteinExistence type="inferred from homology"/>
<organism>
    <name type="scientific">Streptomyces coelicolor (strain ATCC BAA-471 / A3(2) / M145)</name>
    <dbReference type="NCBI Taxonomy" id="100226"/>
    <lineage>
        <taxon>Bacteria</taxon>
        <taxon>Bacillati</taxon>
        <taxon>Actinomycetota</taxon>
        <taxon>Actinomycetes</taxon>
        <taxon>Kitasatosporales</taxon>
        <taxon>Streptomycetaceae</taxon>
        <taxon>Streptomyces</taxon>
        <taxon>Streptomyces albidoflavus group</taxon>
    </lineage>
</organism>
<name>PYRR_STRCO</name>
<keyword id="KW-0328">Glycosyltransferase</keyword>
<keyword id="KW-1185">Reference proteome</keyword>
<keyword id="KW-0804">Transcription</keyword>
<keyword id="KW-0805">Transcription regulation</keyword>
<keyword id="KW-0808">Transferase</keyword>
<gene>
    <name evidence="2" type="primary">pyrR</name>
    <name type="ordered locus">SCO1488</name>
    <name type="ORF">SC9C5.12c</name>
</gene>
<dbReference type="EC" id="2.4.2.9" evidence="2"/>
<dbReference type="EMBL" id="AL939109">
    <property type="protein sequence ID" value="CAB93368.1"/>
    <property type="molecule type" value="Genomic_DNA"/>
</dbReference>
<dbReference type="RefSeq" id="NP_625768.1">
    <property type="nucleotide sequence ID" value="NC_003888.3"/>
</dbReference>
<dbReference type="RefSeq" id="WP_003977338.1">
    <property type="nucleotide sequence ID" value="NZ_VNID01000021.1"/>
</dbReference>
<dbReference type="SMR" id="Q9KXR1"/>
<dbReference type="FunCoup" id="Q9KXR1">
    <property type="interactions" value="32"/>
</dbReference>
<dbReference type="STRING" id="100226.gene:17759074"/>
<dbReference type="PaxDb" id="100226-SCO1488"/>
<dbReference type="GeneID" id="91387544"/>
<dbReference type="KEGG" id="sco:SCO1488"/>
<dbReference type="PATRIC" id="fig|100226.15.peg.1497"/>
<dbReference type="eggNOG" id="COG2065">
    <property type="taxonomic scope" value="Bacteria"/>
</dbReference>
<dbReference type="HOGENOM" id="CLU_094234_2_1_11"/>
<dbReference type="InParanoid" id="Q9KXR1"/>
<dbReference type="OrthoDB" id="9802227at2"/>
<dbReference type="PhylomeDB" id="Q9KXR1"/>
<dbReference type="Proteomes" id="UP000001973">
    <property type="component" value="Chromosome"/>
</dbReference>
<dbReference type="GO" id="GO:0004845">
    <property type="term" value="F:uracil phosphoribosyltransferase activity"/>
    <property type="evidence" value="ECO:0007669"/>
    <property type="project" value="UniProtKB-UniRule"/>
</dbReference>
<dbReference type="GO" id="GO:0006355">
    <property type="term" value="P:regulation of DNA-templated transcription"/>
    <property type="evidence" value="ECO:0007669"/>
    <property type="project" value="UniProtKB-UniRule"/>
</dbReference>
<dbReference type="CDD" id="cd06223">
    <property type="entry name" value="PRTases_typeI"/>
    <property type="match status" value="1"/>
</dbReference>
<dbReference type="FunFam" id="3.40.50.2020:FF:000020">
    <property type="entry name" value="Bifunctional protein PyrR"/>
    <property type="match status" value="1"/>
</dbReference>
<dbReference type="Gene3D" id="3.40.50.2020">
    <property type="match status" value="1"/>
</dbReference>
<dbReference type="HAMAP" id="MF_01219">
    <property type="entry name" value="PyrR"/>
    <property type="match status" value="1"/>
</dbReference>
<dbReference type="InterPro" id="IPR000836">
    <property type="entry name" value="PRibTrfase_dom"/>
</dbReference>
<dbReference type="InterPro" id="IPR029057">
    <property type="entry name" value="PRTase-like"/>
</dbReference>
<dbReference type="InterPro" id="IPR023050">
    <property type="entry name" value="PyrR"/>
</dbReference>
<dbReference type="InterPro" id="IPR050137">
    <property type="entry name" value="PyrR_bifunctional"/>
</dbReference>
<dbReference type="NCBIfam" id="NF003547">
    <property type="entry name" value="PRK05205.1-3"/>
    <property type="match status" value="1"/>
</dbReference>
<dbReference type="NCBIfam" id="NF003549">
    <property type="entry name" value="PRK05205.1-5"/>
    <property type="match status" value="1"/>
</dbReference>
<dbReference type="PANTHER" id="PTHR11608">
    <property type="entry name" value="BIFUNCTIONAL PROTEIN PYRR"/>
    <property type="match status" value="1"/>
</dbReference>
<dbReference type="PANTHER" id="PTHR11608:SF0">
    <property type="entry name" value="BIFUNCTIONAL PROTEIN PYRR"/>
    <property type="match status" value="1"/>
</dbReference>
<dbReference type="Pfam" id="PF00156">
    <property type="entry name" value="Pribosyltran"/>
    <property type="match status" value="1"/>
</dbReference>
<dbReference type="SUPFAM" id="SSF53271">
    <property type="entry name" value="PRTase-like"/>
    <property type="match status" value="1"/>
</dbReference>
<sequence length="193" mass="21248">MDKQQDQQQEARPVLEGPDIARVLTRIAHEIVERAKGADDVVLLGIPTRGVFLARRLADKLEQITERKMPVGSLDITMYRDDLRMHPPRALARTEIPGDGIDGRLVVLVDDVLFSGRTIRAALDALNDIGRPRAVQLAVLVDRGHRELPIRADYVGKNLPTSLRETVKVQLAEEDGRDTVLLGAKPAAPGAHP</sequence>